<comment type="function">
    <text evidence="6 7 8">Acetyltransferase; part of the gene cluster that mediates the biosynthesis of azaphilone pigments (MonAzPs), a complex mixture of compounds with a common azaphilone skeleton very widely used as food colorants (PubMed:26946170, PubMed:28959415, PubMed:34220766). PigM and pigO are involved in the elimination of the omega-1 alcohol with pigM acting as an O-acetyltransferase that synthesizes the O-11 acetyl intermediate whereas pigO eliminates acetic acid to yield an intermediate with a C10(11) double bond (PubMed:28959415). The first step of the pathway is performed by the nrPKS pigA that forms the hexaketide precursor from successive condensations of five malonyl-CoA units, with a simple acetyl-CoA starter unit. The role of esterase pigG is not clear, but it may play at most a supplementary role in the formation of the benzaldehyde produced by the pigA nrPKS. This very reactive benzaldehyde is intercepted by the pigC ketoreductase that to provide the first stable enzyme-free MonAzPs intermediate, 6-(4-hydroxy-2-oxopentyl)-3-methyl-2,4-dioxocyclohexane carbaldehyde, also known as M7PKS-1. The FAD-dependent monooxygenase pigN hydroxylates M7PKS-1 at C-4, which triggers the formation of the pyran ring. PigJ, pigK and pigD are involved in the acetylation of the pyran ring. PigJ and pigK form the two subunits of a dedicated fungal FAS that produces the side chain fatty acyl moiety of MonAzPs and pigD transfers the fatty acyl chain to the C-4 alcohol. PigM and pigO are involved in the elimination of the omega-1 alcohol. PigM acts as an O-acetyltransferase that synthesizes the putative O-11 acetyl intermediate whereas pigO eliminates acetic acid to yield an intermediate with a C10(11) double bond. The dehydration of the C-11 alcohol followed by the reduction of the C6(7) double bond by the NAD(P)H-dependent oxidoreductase pigE increases the electrophilicity of the C-5 ketone of the resulting acyl benzopyran. This in turn sets up the C-5 ketone for an intramolecular Knoevenagel aldol condensation with the C-20 enol of the side chain. This condensation affords the characteristic linear tricyclic carbon skeletons of the yellow pigments that serve as the common precursors for the classical yellow pigments monascin and ankaflavin, orange pigments rubopunctatin and monascorubrin, and red pigments ribropunctamine and monascorubramine. The FAD-dependent oxidoreductase pigF is especially invoved in the biosynthesis of orange and red pigments via desaturation of C6(7) (PubMed:28959415).</text>
</comment>
<comment type="pathway">
    <text evidence="6 7">Secondary metabolite biosynthesis.</text>
</comment>
<comment type="induction">
    <text evidence="8">Expression is positively regulated by the azaphilone pigments (MonAzPs) gene cluster-specific transcription regulator pigB.</text>
</comment>
<comment type="disruption phenotype">
    <text evidence="7">Produces the angular tricyclic shunt intermediates monasfluol A and monasfluol B that retain the omega-1 alcohol.</text>
</comment>
<comment type="biotechnology">
    <text evidence="1 2 3 4 5 9">As colorants, MonAzPs are widely used in various food products for centuries (PubMed:37087240). Moreover, MonAzPs also possess wide-ranging biological activities such as antibacterial activity, preventing hypertension, lowering cholesterol levels, causing hypolipidemic effects, and displaying antiobesity and antitumor activities (PubMed:16283302, PubMed:16660141, PubMed:17191930, PubMed:20666456, PubMed:22562164).</text>
</comment>
<comment type="similarity">
    <text evidence="11">Belongs to the trichothecene O-acetyltransferase family.</text>
</comment>
<reference key="1">
    <citation type="submission" date="2016-05" db="EMBL/GenBank/DDBJ databases">
        <title>The biosynthetic steps of Monascus azahpilone pigments in fungi.</title>
        <authorList>
            <person name="Chen W."/>
            <person name="Chen F."/>
        </authorList>
    </citation>
    <scope>NUCLEOTIDE SEQUENCE [MRNA]</scope>
    <source>
        <strain>M7</strain>
    </source>
</reference>
<reference key="2">
    <citation type="submission" date="2019-04" db="EMBL/GenBank/DDBJ databases">
        <authorList>
            <person name="Guo X."/>
            <person name="Chen M."/>
            <person name="Ma X."/>
        </authorList>
    </citation>
    <scope>NUCLEOTIDE SEQUENCE [GENOMIC DNA]</scope>
    <source>
        <strain>CGMCC 3.19587</strain>
    </source>
</reference>
<reference key="3">
    <citation type="journal article" date="1977" name="Plant Physiol.">
        <title>Pigmentation and antibacterial activity of fast neutron- and X-ray-induced strains of Monascus purpureus went.</title>
        <authorList>
            <person name="Wong H.C."/>
            <person name="Bau Y.S."/>
        </authorList>
    </citation>
    <scope>BIOTECHNOLOGY</scope>
</reference>
<reference key="4">
    <citation type="journal article" date="2005" name="Chem. Biodivers.">
        <title>Anti-tumor-initiating effects of monascin, an azaphilonoid pigment from the extract of Monascus pilosus fermented rice (red-mold rice).</title>
        <authorList>
            <person name="Akihisa T."/>
            <person name="Tokuda H."/>
            <person name="Ukiya M."/>
            <person name="Kiyota A."/>
            <person name="Yasukawa K."/>
            <person name="Sakamoto N."/>
            <person name="Kimura Y."/>
            <person name="Suzuki T."/>
            <person name="Takayasu J."/>
            <person name="Nishino H."/>
        </authorList>
    </citation>
    <scope>BIOTECHNOLOGY</scope>
</reference>
<reference key="5">
    <citation type="journal article" date="2006" name="Appl. Microbiol. Biotechnol.">
        <title>In vivo hypolipidemic effects and safety of low dosage Monascus powder in a hamster model of hyperlipidemia.</title>
        <authorList>
            <person name="Lee C.L."/>
            <person name="Tsai T.Y."/>
            <person name="Wang J.J."/>
            <person name="Pan T.M."/>
        </authorList>
    </citation>
    <scope>BIOTECHNOLOGY</scope>
</reference>
<reference key="6">
    <citation type="journal article" date="2010" name="J. Agric. Food Chem.">
        <title>Monascin and ankaflavin act as novel hypolipidemic and high-density lipoprotein cholesterol-raising agents in red mold dioscorea.</title>
        <authorList>
            <person name="Lee C.L."/>
            <person name="Kung Y.H."/>
            <person name="Wu C.L."/>
            <person name="Hsu Y.W."/>
            <person name="Pan T.M."/>
        </authorList>
    </citation>
    <scope>BIOTECHNOLOGY</scope>
</reference>
<reference key="7">
    <citation type="journal article" date="2012" name="Appl. Microbiol. Biotechnol.">
        <title>Development of Monascus fermentation technology for high hypolipidemic effect.</title>
        <authorList>
            <person name="Lee C.L."/>
            <person name="Pan T.M."/>
        </authorList>
    </citation>
    <scope>BIOTECHNOLOGY</scope>
</reference>
<reference key="8">
    <citation type="journal article" date="2016" name="Appl. Microbiol. Biotechnol.">
        <title>Identification and role analysis of an intermediate produced by a polygenic mutant of Monascus pigments cluster in Monascus ruber M7.</title>
        <authorList>
            <person name="Liu J."/>
            <person name="Zhou Y."/>
            <person name="Yi T."/>
            <person name="Zhao M."/>
            <person name="Xie N."/>
            <person name="Lei M."/>
            <person name="Liu Q."/>
            <person name="Shao Y."/>
            <person name="Chen F."/>
        </authorList>
    </citation>
    <scope>FUNCTION</scope>
    <scope>PATHWAY</scope>
</reference>
<reference key="9">
    <citation type="journal article" date="2017" name="Chem. Sci.">
        <title>Orange, red, yellow: biosynthesis of azaphilone pigments in Monascus fungi.</title>
        <authorList>
            <person name="Chen W."/>
            <person name="Chen R."/>
            <person name="Liu Q."/>
            <person name="He Y."/>
            <person name="He K."/>
            <person name="Ding X."/>
            <person name="Kang L."/>
            <person name="Guo X."/>
            <person name="Xie N."/>
            <person name="Zhou Y."/>
            <person name="Lu Y."/>
            <person name="Cox R.J."/>
            <person name="Molnar I."/>
            <person name="Li M."/>
            <person name="Shao Y."/>
            <person name="Chen F."/>
        </authorList>
    </citation>
    <scope>FUNCTION</scope>
    <scope>DISRUPTION PHENOTYPE</scope>
    <scope>CATALYTIC ACTIVITY</scope>
    <scope>PATHWAY</scope>
</reference>
<reference key="10">
    <citation type="journal article" date="2021" name="Front. Microbiol.">
        <title>An integrated approach to determine the boundaries of the azaphilone pigment biosynthetic gene cluster of Monascus ruber M7 gown on potato dextrose agar.</title>
        <authorList>
            <person name="Liu Q."/>
            <person name="Zhong S."/>
            <person name="Wang X."/>
            <person name="Gao S."/>
            <person name="Yang X."/>
            <person name="Chen F."/>
            <person name="Molnar I."/>
        </authorList>
    </citation>
    <scope>FUNCTION</scope>
    <scope>INDUCTION</scope>
</reference>
<reference key="11">
    <citation type="journal article" date="2023" name="Food Res. Intern.">
        <title>Improved natural food colorant production in the filamentous fungus Monascus ruber using CRISPR-based engineering.</title>
        <authorList>
            <person name="Ree Yoon H."/>
            <person name="Han S."/>
            <person name="Chul Shin S."/>
            <person name="Cheong Yeom S."/>
            <person name="Jin Kim H."/>
        </authorList>
    </citation>
    <scope>BIOTECHNOLOGY</scope>
</reference>
<accession>A0A2Z1UAF5</accession>
<keyword id="KW-0608">Pigment</keyword>
<keyword id="KW-0808">Transferase</keyword>
<protein>
    <recommendedName>
        <fullName evidence="10">Acetyltransferase pigO</fullName>
        <ecNumber evidence="12">2.3.1.-</ecNumber>
    </recommendedName>
    <alternativeName>
        <fullName evidence="10">Azaphilone pigments biosynthesis cluster protein O</fullName>
    </alternativeName>
</protein>
<sequence>MPWSEVSPGHFQRPLGANEKFIKSIGDRAHPLGREHWSVTAQARFKTSDALQGGQERVPELHKAWKTMRFAHPSIASIANAETLDYYVPSPDGLEDWMQQTFFVVEEDTSSQQYIASLQPSPYLTAHYLVRTSELILHTAHWRTDGFGAMQLVNAFFEAFAGLDDRDPIDLPWGQEVARLVPSIEEVLDLPEEATPEIKAATAECMATLALTRGAVGVSYQGDLTTLPAGTHSVQGRLSQSETKAIEEACCTRGISLLSAVHASVAATTYAGASSEAKSKPYTSTMRFNLRPYVPEPYSSPAYASALYTGGYMVQVPATHSWTENVREYNSAYRRGLSKGFLRARREYALNVQELLKKNIAMDGPPPSEVDISSIDDAELLVRPVYHGKSGDVEILDVSIGVETLTRQLYCFVWTFRGQLGFNLVYNEAYYNLTTATVLLDTLKNVLLTELGIRDDRAI</sequence>
<proteinExistence type="evidence at protein level"/>
<evidence type="ECO:0000269" key="1">
    <source>
    </source>
</evidence>
<evidence type="ECO:0000269" key="2">
    <source>
    </source>
</evidence>
<evidence type="ECO:0000269" key="3">
    <source>
    </source>
</evidence>
<evidence type="ECO:0000269" key="4">
    <source>
    </source>
</evidence>
<evidence type="ECO:0000269" key="5">
    <source>
    </source>
</evidence>
<evidence type="ECO:0000269" key="6">
    <source>
    </source>
</evidence>
<evidence type="ECO:0000269" key="7">
    <source>
    </source>
</evidence>
<evidence type="ECO:0000269" key="8">
    <source>
    </source>
</evidence>
<evidence type="ECO:0000269" key="9">
    <source>
    </source>
</evidence>
<evidence type="ECO:0000303" key="10">
    <source>
    </source>
</evidence>
<evidence type="ECO:0000305" key="11"/>
<evidence type="ECO:0000305" key="12">
    <source>
    </source>
</evidence>
<feature type="chain" id="PRO_0000460208" description="Acetyltransferase pigO">
    <location>
        <begin position="1"/>
        <end position="459"/>
    </location>
</feature>
<name>PIGO_MONRU</name>
<dbReference type="EC" id="2.3.1.-" evidence="12"/>
<dbReference type="EMBL" id="KX290844">
    <property type="protein sequence ID" value="ANS12244.1"/>
    <property type="molecule type" value="mRNA"/>
</dbReference>
<dbReference type="EMBL" id="MK764691">
    <property type="protein sequence ID" value="QGA67181.1"/>
    <property type="molecule type" value="Genomic_DNA"/>
</dbReference>
<dbReference type="SMR" id="A0A2Z1UAF5"/>
<dbReference type="GO" id="GO:0031409">
    <property type="term" value="F:pigment binding"/>
    <property type="evidence" value="ECO:0007669"/>
    <property type="project" value="UniProtKB-KW"/>
</dbReference>
<dbReference type="GO" id="GO:0016740">
    <property type="term" value="F:transferase activity"/>
    <property type="evidence" value="ECO:0007669"/>
    <property type="project" value="UniProtKB-KW"/>
</dbReference>
<dbReference type="Gene3D" id="3.30.559.10">
    <property type="entry name" value="Chloramphenicol acetyltransferase-like domain"/>
    <property type="match status" value="1"/>
</dbReference>
<dbReference type="Gene3D" id="3.30.559.30">
    <property type="entry name" value="Nonribosomal peptide synthetase, condensation domain"/>
    <property type="match status" value="1"/>
</dbReference>
<dbReference type="InterPro" id="IPR023213">
    <property type="entry name" value="CAT-like_dom_sf"/>
</dbReference>
<dbReference type="PANTHER" id="PTHR42034">
    <property type="entry name" value="CHROMOSOME 7, WHOLE GENOME SHOTGUN SEQUENCE-RELATED"/>
    <property type="match status" value="1"/>
</dbReference>
<dbReference type="PANTHER" id="PTHR42034:SF1">
    <property type="entry name" value="CONDENSATION DOMAIN-CONTAINING PROTEIN"/>
    <property type="match status" value="1"/>
</dbReference>
<dbReference type="SUPFAM" id="SSF52777">
    <property type="entry name" value="CoA-dependent acyltransferases"/>
    <property type="match status" value="1"/>
</dbReference>
<gene>
    <name evidence="10" type="primary">pigO</name>
</gene>
<organism>
    <name type="scientific">Monascus ruber</name>
    <name type="common">Mold</name>
    <dbReference type="NCBI Taxonomy" id="89489"/>
    <lineage>
        <taxon>Eukaryota</taxon>
        <taxon>Fungi</taxon>
        <taxon>Dikarya</taxon>
        <taxon>Ascomycota</taxon>
        <taxon>Pezizomycotina</taxon>
        <taxon>Eurotiomycetes</taxon>
        <taxon>Eurotiomycetidae</taxon>
        <taxon>Eurotiales</taxon>
        <taxon>Aspergillaceae</taxon>
        <taxon>Monascus</taxon>
    </lineage>
</organism>